<organism>
    <name type="scientific">Californiconus californicus</name>
    <name type="common">California cone</name>
    <name type="synonym">Conus californicus</name>
    <dbReference type="NCBI Taxonomy" id="1736779"/>
    <lineage>
        <taxon>Eukaryota</taxon>
        <taxon>Metazoa</taxon>
        <taxon>Spiralia</taxon>
        <taxon>Lophotrochozoa</taxon>
        <taxon>Mollusca</taxon>
        <taxon>Gastropoda</taxon>
        <taxon>Caenogastropoda</taxon>
        <taxon>Neogastropoda</taxon>
        <taxon>Conoidea</taxon>
        <taxon>Conidae</taxon>
        <taxon>Californiconus</taxon>
    </lineage>
</organism>
<proteinExistence type="inferred from homology"/>
<sequence length="80" mass="9189">MKMSVTFLLILMILPLFTGEWQSGSRLSALKKRLLEKRLLQKRFCTEIGKDCGTSWECCEDCCIHGTCSHESNCANFKLR</sequence>
<accession>D6C4I0</accession>
<reference key="1">
    <citation type="journal article" date="2010" name="Mol. Phylogenet. Evol.">
        <title>Evolution of Conus peptide toxins: analysis of Conus californicus Reeve, 1844.</title>
        <authorList>
            <person name="Biggs J.S."/>
            <person name="Watkins M."/>
            <person name="Puillandre N."/>
            <person name="Ownby J.P."/>
            <person name="Lopez-Vera E."/>
            <person name="Christensen S."/>
            <person name="Moreno K.J."/>
            <person name="Bernaldez J."/>
            <person name="Licea-Navarro A."/>
            <person name="Corneli P.S."/>
            <person name="Olivera B.M."/>
        </authorList>
    </citation>
    <scope>NUCLEOTIDE SEQUENCE [GENOMIC DNA]</scope>
</reference>
<comment type="subcellular location">
    <subcellularLocation>
        <location evidence="1">Secreted</location>
    </subcellularLocation>
</comment>
<comment type="tissue specificity">
    <text>Expressed by the venom duct.</text>
</comment>
<comment type="domain">
    <text>The cysteine framework is XI (C-C-CC-CC-C-C).</text>
</comment>
<comment type="similarity">
    <text evidence="4">Belongs to the conotoxin I1 superfamily.</text>
</comment>
<evidence type="ECO:0000250" key="1"/>
<evidence type="ECO:0000250" key="2">
    <source>
        <dbReference type="UniProtKB" id="Q7Z094"/>
    </source>
</evidence>
<evidence type="ECO:0000255" key="3"/>
<evidence type="ECO:0000305" key="4"/>
<name>I1B2_CONCL</name>
<dbReference type="EMBL" id="FJ959122">
    <property type="protein sequence ID" value="ADB93092.1"/>
    <property type="molecule type" value="Genomic_DNA"/>
</dbReference>
<dbReference type="SMR" id="D6C4I0"/>
<dbReference type="ConoServer" id="4008">
    <property type="toxin name" value="Cal11.2 precursor"/>
</dbReference>
<dbReference type="GO" id="GO:0005576">
    <property type="term" value="C:extracellular region"/>
    <property type="evidence" value="ECO:0007669"/>
    <property type="project" value="UniProtKB-SubCell"/>
</dbReference>
<dbReference type="GO" id="GO:0090729">
    <property type="term" value="F:toxin activity"/>
    <property type="evidence" value="ECO:0007669"/>
    <property type="project" value="UniProtKB-KW"/>
</dbReference>
<dbReference type="InterPro" id="IPR013141">
    <property type="entry name" value="Conotoxin-I_CS"/>
</dbReference>
<dbReference type="PROSITE" id="PS60019">
    <property type="entry name" value="I_CONOTOXIN"/>
    <property type="match status" value="1"/>
</dbReference>
<keyword id="KW-0165">Cleavage on pair of basic residues</keyword>
<keyword id="KW-1015">Disulfide bond</keyword>
<keyword id="KW-0528">Neurotoxin</keyword>
<keyword id="KW-0964">Secreted</keyword>
<keyword id="KW-0732">Signal</keyword>
<keyword id="KW-0800">Toxin</keyword>
<feature type="signal peptide" evidence="3">
    <location>
        <begin position="1"/>
        <end position="19"/>
    </location>
</feature>
<feature type="propeptide" id="PRO_0000415008" evidence="1">
    <location>
        <begin position="20"/>
        <end position="41"/>
    </location>
</feature>
<feature type="peptide" id="PRO_0000415009" description="Conotoxin Cl11.2">
    <location>
        <begin position="44"/>
        <end position="79"/>
    </location>
</feature>
<feature type="disulfide bond" evidence="2">
    <location>
        <begin position="45"/>
        <end position="59"/>
    </location>
</feature>
<feature type="disulfide bond" evidence="2">
    <location>
        <begin position="52"/>
        <end position="63"/>
    </location>
</feature>
<feature type="disulfide bond" evidence="2">
    <location>
        <begin position="58"/>
        <end position="68"/>
    </location>
</feature>
<feature type="disulfide bond" evidence="2">
    <location>
        <begin position="62"/>
        <end position="74"/>
    </location>
</feature>
<protein>
    <recommendedName>
        <fullName>Conotoxin Cl11.2</fullName>
    </recommendedName>
</protein>